<organism>
    <name type="scientific">Shigella flexneri</name>
    <dbReference type="NCBI Taxonomy" id="623"/>
    <lineage>
        <taxon>Bacteria</taxon>
        <taxon>Pseudomonadati</taxon>
        <taxon>Pseudomonadota</taxon>
        <taxon>Gammaproteobacteria</taxon>
        <taxon>Enterobacterales</taxon>
        <taxon>Enterobacteriaceae</taxon>
        <taxon>Shigella</taxon>
    </lineage>
</organism>
<feature type="chain" id="PRO_0000170987" description="Molybdopterin adenylyltransferase">
    <location>
        <begin position="1"/>
        <end position="195"/>
    </location>
</feature>
<sequence>MNTLRIGLVSISDRASSGVYQDKGIPALEEWLTSALTTPFELETRLIPDEQAIIEQTLCELVDEMSCHLVLTTGGTGPARRDVTPDATLAVADREMPGFGEQMRQISLHFVPTAILSRQVGVIRKQALILNLPGQPKSIKETLEGVKDAEGNVVVHGIFASVPYCIQLLEGPYVETAPEVVAAFRPKSARRDVSE</sequence>
<reference key="1">
    <citation type="journal article" date="2002" name="Nucleic Acids Res.">
        <title>Genome sequence of Shigella flexneri 2a: insights into pathogenicity through comparison with genomes of Escherichia coli K12 and O157.</title>
        <authorList>
            <person name="Jin Q."/>
            <person name="Yuan Z."/>
            <person name="Xu J."/>
            <person name="Wang Y."/>
            <person name="Shen Y."/>
            <person name="Lu W."/>
            <person name="Wang J."/>
            <person name="Liu H."/>
            <person name="Yang J."/>
            <person name="Yang F."/>
            <person name="Zhang X."/>
            <person name="Zhang J."/>
            <person name="Yang G."/>
            <person name="Wu H."/>
            <person name="Qu D."/>
            <person name="Dong J."/>
            <person name="Sun L."/>
            <person name="Xue Y."/>
            <person name="Zhao A."/>
            <person name="Gao Y."/>
            <person name="Zhu J."/>
            <person name="Kan B."/>
            <person name="Ding K."/>
            <person name="Chen S."/>
            <person name="Cheng H."/>
            <person name="Yao Z."/>
            <person name="He B."/>
            <person name="Chen R."/>
            <person name="Ma D."/>
            <person name="Qiang B."/>
            <person name="Wen Y."/>
            <person name="Hou Y."/>
            <person name="Yu J."/>
        </authorList>
    </citation>
    <scope>NUCLEOTIDE SEQUENCE [LARGE SCALE GENOMIC DNA]</scope>
    <source>
        <strain>301 / Serotype 2a</strain>
    </source>
</reference>
<reference key="2">
    <citation type="journal article" date="2003" name="Infect. Immun.">
        <title>Complete genome sequence and comparative genomics of Shigella flexneri serotype 2a strain 2457T.</title>
        <authorList>
            <person name="Wei J."/>
            <person name="Goldberg M.B."/>
            <person name="Burland V."/>
            <person name="Venkatesan M.M."/>
            <person name="Deng W."/>
            <person name="Fournier G."/>
            <person name="Mayhew G.F."/>
            <person name="Plunkett G. III"/>
            <person name="Rose D.J."/>
            <person name="Darling A."/>
            <person name="Mau B."/>
            <person name="Perna N.T."/>
            <person name="Payne S.M."/>
            <person name="Runyen-Janecky L.J."/>
            <person name="Zhou S."/>
            <person name="Schwartz D.C."/>
            <person name="Blattner F.R."/>
        </authorList>
    </citation>
    <scope>NUCLEOTIDE SEQUENCE [LARGE SCALE GENOMIC DNA]</scope>
    <source>
        <strain>ATCC 700930 / 2457T / Serotype 2a</strain>
    </source>
</reference>
<proteinExistence type="inferred from homology"/>
<comment type="function">
    <text evidence="1">Catalyzes the adenylation of molybdopterin as part of the biosynthesis of the molybdenum-cofactor.</text>
</comment>
<comment type="catalytic activity">
    <reaction>
        <text>molybdopterin + ATP + H(+) = adenylyl-molybdopterin + diphosphate</text>
        <dbReference type="Rhea" id="RHEA:31331"/>
        <dbReference type="ChEBI" id="CHEBI:15378"/>
        <dbReference type="ChEBI" id="CHEBI:30616"/>
        <dbReference type="ChEBI" id="CHEBI:33019"/>
        <dbReference type="ChEBI" id="CHEBI:58698"/>
        <dbReference type="ChEBI" id="CHEBI:62727"/>
        <dbReference type="EC" id="2.7.7.75"/>
    </reaction>
</comment>
<comment type="pathway">
    <text>Cofactor biosynthesis; molybdopterin biosynthesis.</text>
</comment>
<comment type="similarity">
    <text evidence="2">Belongs to the MoaB/Mog family.</text>
</comment>
<dbReference type="EC" id="2.7.7.75"/>
<dbReference type="EMBL" id="AE005674">
    <property type="protein sequence ID" value="AAN41676.2"/>
    <property type="molecule type" value="Genomic_DNA"/>
</dbReference>
<dbReference type="EMBL" id="AE014073">
    <property type="protein sequence ID" value="AAP15555.1"/>
    <property type="molecule type" value="Genomic_DNA"/>
</dbReference>
<dbReference type="RefSeq" id="WP_001295414.1">
    <property type="nucleotide sequence ID" value="NZ_WPGW01000013.1"/>
</dbReference>
<dbReference type="SMR" id="P0AF05"/>
<dbReference type="STRING" id="198214.SF0010"/>
<dbReference type="PaxDb" id="198214-SF0010"/>
<dbReference type="GeneID" id="75169908"/>
<dbReference type="KEGG" id="sfl:SF0010"/>
<dbReference type="KEGG" id="sfx:S0009"/>
<dbReference type="PATRIC" id="fig|198214.7.peg.9"/>
<dbReference type="HOGENOM" id="CLU_077358_1_0_6"/>
<dbReference type="UniPathway" id="UPA00344"/>
<dbReference type="Proteomes" id="UP000001006">
    <property type="component" value="Chromosome"/>
</dbReference>
<dbReference type="Proteomes" id="UP000002673">
    <property type="component" value="Chromosome"/>
</dbReference>
<dbReference type="GO" id="GO:0005524">
    <property type="term" value="F:ATP binding"/>
    <property type="evidence" value="ECO:0007669"/>
    <property type="project" value="UniProtKB-KW"/>
</dbReference>
<dbReference type="GO" id="GO:0061598">
    <property type="term" value="F:molybdopterin adenylyltransferase activity"/>
    <property type="evidence" value="ECO:0007669"/>
    <property type="project" value="UniProtKB-EC"/>
</dbReference>
<dbReference type="GO" id="GO:0006777">
    <property type="term" value="P:Mo-molybdopterin cofactor biosynthetic process"/>
    <property type="evidence" value="ECO:0007669"/>
    <property type="project" value="UniProtKB-KW"/>
</dbReference>
<dbReference type="CDD" id="cd00886">
    <property type="entry name" value="MogA_MoaB"/>
    <property type="match status" value="1"/>
</dbReference>
<dbReference type="FunFam" id="3.40.980.10:FF:000005">
    <property type="entry name" value="Molybdopterin biosynthesis mog protein"/>
    <property type="match status" value="1"/>
</dbReference>
<dbReference type="Gene3D" id="3.40.980.10">
    <property type="entry name" value="MoaB/Mog-like domain"/>
    <property type="match status" value="1"/>
</dbReference>
<dbReference type="InterPro" id="IPR036425">
    <property type="entry name" value="MoaB/Mog-like_dom_sf"/>
</dbReference>
<dbReference type="InterPro" id="IPR001453">
    <property type="entry name" value="MoaB/Mog_dom"/>
</dbReference>
<dbReference type="InterPro" id="IPR008284">
    <property type="entry name" value="MoCF_biosynth_CS"/>
</dbReference>
<dbReference type="InterPro" id="IPR051920">
    <property type="entry name" value="MPT_Adenylyltrnsfr/MoaC-Rel"/>
</dbReference>
<dbReference type="NCBIfam" id="TIGR00177">
    <property type="entry name" value="molyb_syn"/>
    <property type="match status" value="1"/>
</dbReference>
<dbReference type="NCBIfam" id="NF006932">
    <property type="entry name" value="PRK09417.1"/>
    <property type="match status" value="1"/>
</dbReference>
<dbReference type="PANTHER" id="PTHR43764">
    <property type="entry name" value="MOLYBDENUM COFACTOR BIOSYNTHESIS"/>
    <property type="match status" value="1"/>
</dbReference>
<dbReference type="PANTHER" id="PTHR43764:SF1">
    <property type="entry name" value="MOLYBDOPTERIN MOLYBDOTRANSFERASE"/>
    <property type="match status" value="1"/>
</dbReference>
<dbReference type="Pfam" id="PF00994">
    <property type="entry name" value="MoCF_biosynth"/>
    <property type="match status" value="1"/>
</dbReference>
<dbReference type="SMART" id="SM00852">
    <property type="entry name" value="MoCF_biosynth"/>
    <property type="match status" value="1"/>
</dbReference>
<dbReference type="SUPFAM" id="SSF53218">
    <property type="entry name" value="Molybdenum cofactor biosynthesis proteins"/>
    <property type="match status" value="1"/>
</dbReference>
<dbReference type="PROSITE" id="PS01078">
    <property type="entry name" value="MOCF_BIOSYNTHESIS_1"/>
    <property type="match status" value="1"/>
</dbReference>
<evidence type="ECO:0000250" key="1"/>
<evidence type="ECO:0000305" key="2"/>
<accession>P0AF05</accession>
<accession>P28694</accession>
<accession>Q8KMY3</accession>
<gene>
    <name type="primary">mog</name>
    <name type="ordered locus">SF0010</name>
    <name type="ordered locus">S0009</name>
</gene>
<protein>
    <recommendedName>
        <fullName>Molybdopterin adenylyltransferase</fullName>
        <shortName>MPT adenylyltransferase</shortName>
        <ecNumber>2.7.7.75</ecNumber>
    </recommendedName>
</protein>
<name>MOG_SHIFL</name>
<keyword id="KW-0067">ATP-binding</keyword>
<keyword id="KW-0501">Molybdenum cofactor biosynthesis</keyword>
<keyword id="KW-0547">Nucleotide-binding</keyword>
<keyword id="KW-1185">Reference proteome</keyword>
<keyword id="KW-0808">Transferase</keyword>